<dbReference type="EC" id="2.7.11.1" evidence="1"/>
<dbReference type="EMBL" id="BA000004">
    <property type="protein sequence ID" value="BAB05256.1"/>
    <property type="molecule type" value="Genomic_DNA"/>
</dbReference>
<dbReference type="PIR" id="A83842">
    <property type="entry name" value="A83842"/>
</dbReference>
<dbReference type="RefSeq" id="WP_010897702.1">
    <property type="nucleotide sequence ID" value="NC_002570.2"/>
</dbReference>
<dbReference type="SMR" id="Q9KCN2"/>
<dbReference type="STRING" id="272558.gene:10727435"/>
<dbReference type="GeneID" id="87597160"/>
<dbReference type="KEGG" id="bha:BH1537"/>
<dbReference type="eggNOG" id="COG2172">
    <property type="taxonomic scope" value="Bacteria"/>
</dbReference>
<dbReference type="HOGENOM" id="CLU_090336_11_0_9"/>
<dbReference type="OrthoDB" id="9768808at2"/>
<dbReference type="Proteomes" id="UP000001258">
    <property type="component" value="Chromosome"/>
</dbReference>
<dbReference type="GO" id="GO:0005524">
    <property type="term" value="F:ATP binding"/>
    <property type="evidence" value="ECO:0007669"/>
    <property type="project" value="UniProtKB-KW"/>
</dbReference>
<dbReference type="GO" id="GO:0106310">
    <property type="term" value="F:protein serine kinase activity"/>
    <property type="evidence" value="ECO:0007669"/>
    <property type="project" value="RHEA"/>
</dbReference>
<dbReference type="GO" id="GO:0004674">
    <property type="term" value="F:protein serine/threonine kinase activity"/>
    <property type="evidence" value="ECO:0007669"/>
    <property type="project" value="UniProtKB-KW"/>
</dbReference>
<dbReference type="GO" id="GO:0016989">
    <property type="term" value="F:sigma factor antagonist activity"/>
    <property type="evidence" value="ECO:0007669"/>
    <property type="project" value="InterPro"/>
</dbReference>
<dbReference type="GO" id="GO:0030436">
    <property type="term" value="P:asexual sporulation"/>
    <property type="evidence" value="ECO:0007669"/>
    <property type="project" value="UniProtKB-UniRule"/>
</dbReference>
<dbReference type="GO" id="GO:0042174">
    <property type="term" value="P:negative regulation of sporulation resulting in formation of a cellular spore"/>
    <property type="evidence" value="ECO:0007669"/>
    <property type="project" value="InterPro"/>
</dbReference>
<dbReference type="GO" id="GO:0030435">
    <property type="term" value="P:sporulation resulting in formation of a cellular spore"/>
    <property type="evidence" value="ECO:0007669"/>
    <property type="project" value="UniProtKB-KW"/>
</dbReference>
<dbReference type="Gene3D" id="3.30.565.10">
    <property type="entry name" value="Histidine kinase-like ATPase, C-terminal domain"/>
    <property type="match status" value="1"/>
</dbReference>
<dbReference type="HAMAP" id="MF_00637">
    <property type="entry name" value="Anti_sigma_F"/>
    <property type="match status" value="1"/>
</dbReference>
<dbReference type="InterPro" id="IPR050267">
    <property type="entry name" value="Anti-sigma-factor_SerPK"/>
</dbReference>
<dbReference type="InterPro" id="IPR010194">
    <property type="entry name" value="Anti-sigma_F"/>
</dbReference>
<dbReference type="InterPro" id="IPR036890">
    <property type="entry name" value="HATPase_C_sf"/>
</dbReference>
<dbReference type="NCBIfam" id="TIGR01925">
    <property type="entry name" value="spIIAB"/>
    <property type="match status" value="1"/>
</dbReference>
<dbReference type="PANTHER" id="PTHR35526:SF3">
    <property type="entry name" value="ANTI-SIGMA-F FACTOR RSBW"/>
    <property type="match status" value="1"/>
</dbReference>
<dbReference type="PANTHER" id="PTHR35526">
    <property type="entry name" value="ANTI-SIGMA-F FACTOR RSBW-RELATED"/>
    <property type="match status" value="1"/>
</dbReference>
<dbReference type="Pfam" id="PF13581">
    <property type="entry name" value="HATPase_c_2"/>
    <property type="match status" value="1"/>
</dbReference>
<dbReference type="SMART" id="SM00387">
    <property type="entry name" value="HATPase_c"/>
    <property type="match status" value="1"/>
</dbReference>
<dbReference type="SUPFAM" id="SSF55874">
    <property type="entry name" value="ATPase domain of HSP90 chaperone/DNA topoisomerase II/histidine kinase"/>
    <property type="match status" value="1"/>
</dbReference>
<sequence>MRNEMNLSFSAQSQNESFARVTVGAFIAQLDPTMDEMTEIKTVVSEAVTNAIIHGYQGQPDGVVYIHASIDQGVFELTIRDEGMGISDVEEARQPLYTTKPELERSGMGFTIMENFMDEVKVVSEPMIGTTVFLKKHLTKSKAICN</sequence>
<name>SP2AB_HALH5</name>
<comment type="function">
    <text evidence="1">Binds to sigma F and blocks its ability to form an RNA polymerase holoenzyme (E-sigma F). Phosphorylates SpoIIAA on a serine residue. This phosphorylation may enable SpoIIAA to act as an anti-anti-sigma factor that counteracts SpoIIAB and thus releases sigma F from inhibition.</text>
</comment>
<comment type="catalytic activity">
    <reaction evidence="1">
        <text>L-seryl-[protein] + ATP = O-phospho-L-seryl-[protein] + ADP + H(+)</text>
        <dbReference type="Rhea" id="RHEA:17989"/>
        <dbReference type="Rhea" id="RHEA-COMP:9863"/>
        <dbReference type="Rhea" id="RHEA-COMP:11604"/>
        <dbReference type="ChEBI" id="CHEBI:15378"/>
        <dbReference type="ChEBI" id="CHEBI:29999"/>
        <dbReference type="ChEBI" id="CHEBI:30616"/>
        <dbReference type="ChEBI" id="CHEBI:83421"/>
        <dbReference type="ChEBI" id="CHEBI:456216"/>
        <dbReference type="EC" id="2.7.11.1"/>
    </reaction>
</comment>
<comment type="catalytic activity">
    <reaction evidence="1">
        <text>L-threonyl-[protein] + ATP = O-phospho-L-threonyl-[protein] + ADP + H(+)</text>
        <dbReference type="Rhea" id="RHEA:46608"/>
        <dbReference type="Rhea" id="RHEA-COMP:11060"/>
        <dbReference type="Rhea" id="RHEA-COMP:11605"/>
        <dbReference type="ChEBI" id="CHEBI:15378"/>
        <dbReference type="ChEBI" id="CHEBI:30013"/>
        <dbReference type="ChEBI" id="CHEBI:30616"/>
        <dbReference type="ChEBI" id="CHEBI:61977"/>
        <dbReference type="ChEBI" id="CHEBI:456216"/>
        <dbReference type="EC" id="2.7.11.1"/>
    </reaction>
</comment>
<comment type="similarity">
    <text evidence="1">Belongs to the anti-sigma-factor family.</text>
</comment>
<accession>Q9KCN2</accession>
<protein>
    <recommendedName>
        <fullName evidence="1">Anti-sigma F factor</fullName>
        <ecNumber evidence="1">2.7.11.1</ecNumber>
    </recommendedName>
    <alternativeName>
        <fullName evidence="1">Stage II sporulation protein AB</fullName>
    </alternativeName>
</protein>
<evidence type="ECO:0000255" key="1">
    <source>
        <dbReference type="HAMAP-Rule" id="MF_00637"/>
    </source>
</evidence>
<proteinExistence type="inferred from homology"/>
<gene>
    <name evidence="1" type="primary">spoIIAB</name>
    <name type="ordered locus">BH1537</name>
</gene>
<keyword id="KW-0067">ATP-binding</keyword>
<keyword id="KW-0418">Kinase</keyword>
<keyword id="KW-0547">Nucleotide-binding</keyword>
<keyword id="KW-1185">Reference proteome</keyword>
<keyword id="KW-0723">Serine/threonine-protein kinase</keyword>
<keyword id="KW-0749">Sporulation</keyword>
<keyword id="KW-0808">Transferase</keyword>
<organism>
    <name type="scientific">Halalkalibacterium halodurans (strain ATCC BAA-125 / DSM 18197 / FERM 7344 / JCM 9153 / C-125)</name>
    <name type="common">Bacillus halodurans</name>
    <dbReference type="NCBI Taxonomy" id="272558"/>
    <lineage>
        <taxon>Bacteria</taxon>
        <taxon>Bacillati</taxon>
        <taxon>Bacillota</taxon>
        <taxon>Bacilli</taxon>
        <taxon>Bacillales</taxon>
        <taxon>Bacillaceae</taxon>
        <taxon>Halalkalibacterium (ex Joshi et al. 2022)</taxon>
    </lineage>
</organism>
<reference key="1">
    <citation type="journal article" date="2000" name="Nucleic Acids Res.">
        <title>Complete genome sequence of the alkaliphilic bacterium Bacillus halodurans and genomic sequence comparison with Bacillus subtilis.</title>
        <authorList>
            <person name="Takami H."/>
            <person name="Nakasone K."/>
            <person name="Takaki Y."/>
            <person name="Maeno G."/>
            <person name="Sasaki R."/>
            <person name="Masui N."/>
            <person name="Fuji F."/>
            <person name="Hirama C."/>
            <person name="Nakamura Y."/>
            <person name="Ogasawara N."/>
            <person name="Kuhara S."/>
            <person name="Horikoshi K."/>
        </authorList>
    </citation>
    <scope>NUCLEOTIDE SEQUENCE [LARGE SCALE GENOMIC DNA]</scope>
    <source>
        <strain>ATCC BAA-125 / DSM 18197 / FERM 7344 / JCM 9153 / C-125</strain>
    </source>
</reference>
<feature type="chain" id="PRO_0000203553" description="Anti-sigma F factor">
    <location>
        <begin position="1"/>
        <end position="146"/>
    </location>
</feature>